<keyword id="KW-0002">3D-structure</keyword>
<keyword id="KW-0010">Activator</keyword>
<keyword id="KW-0238">DNA-binding</keyword>
<keyword id="KW-0479">Metal-binding</keyword>
<keyword id="KW-0534">Nitrate assimilation</keyword>
<keyword id="KW-0539">Nucleus</keyword>
<keyword id="KW-1185">Reference proteome</keyword>
<keyword id="KW-0677">Repeat</keyword>
<keyword id="KW-0804">Transcription</keyword>
<keyword id="KW-0805">Transcription regulation</keyword>
<keyword id="KW-0862">Zinc</keyword>
<keyword id="KW-0863">Zinc-finger</keyword>
<reference key="1">
    <citation type="journal article" date="1990" name="Mol. Cell. Biol.">
        <title>nit-2, the major nitrogen regulatory gene of Neurospora crassa, encodes a protein with a putative zinc finger DNA-binding domain.</title>
        <authorList>
            <person name="Fu Y.-H."/>
            <person name="Marzluf G.A."/>
        </authorList>
    </citation>
    <scope>NUCLEOTIDE SEQUENCE [GENOMIC DNA]</scope>
    <source>
        <strain>ATCC 24698 / 74-OR23-1A / CBS 708.71 / DSM 1257 / FGSC 987</strain>
    </source>
</reference>
<reference key="2">
    <citation type="journal article" date="2003" name="Nature">
        <title>The genome sequence of the filamentous fungus Neurospora crassa.</title>
        <authorList>
            <person name="Galagan J.E."/>
            <person name="Calvo S.E."/>
            <person name="Borkovich K.A."/>
            <person name="Selker E.U."/>
            <person name="Read N.D."/>
            <person name="Jaffe D.B."/>
            <person name="FitzHugh W."/>
            <person name="Ma L.-J."/>
            <person name="Smirnov S."/>
            <person name="Purcell S."/>
            <person name="Rehman B."/>
            <person name="Elkins T."/>
            <person name="Engels R."/>
            <person name="Wang S."/>
            <person name="Nielsen C.B."/>
            <person name="Butler J."/>
            <person name="Endrizzi M."/>
            <person name="Qui D."/>
            <person name="Ianakiev P."/>
            <person name="Bell-Pedersen D."/>
            <person name="Nelson M.A."/>
            <person name="Werner-Washburne M."/>
            <person name="Selitrennikoff C.P."/>
            <person name="Kinsey J.A."/>
            <person name="Braun E.L."/>
            <person name="Zelter A."/>
            <person name="Schulte U."/>
            <person name="Kothe G.O."/>
            <person name="Jedd G."/>
            <person name="Mewes H.-W."/>
            <person name="Staben C."/>
            <person name="Marcotte E."/>
            <person name="Greenberg D."/>
            <person name="Roy A."/>
            <person name="Foley K."/>
            <person name="Naylor J."/>
            <person name="Stange-Thomann N."/>
            <person name="Barrett R."/>
            <person name="Gnerre S."/>
            <person name="Kamal M."/>
            <person name="Kamvysselis M."/>
            <person name="Mauceli E.W."/>
            <person name="Bielke C."/>
            <person name="Rudd S."/>
            <person name="Frishman D."/>
            <person name="Krystofova S."/>
            <person name="Rasmussen C."/>
            <person name="Metzenberg R.L."/>
            <person name="Perkins D.D."/>
            <person name="Kroken S."/>
            <person name="Cogoni C."/>
            <person name="Macino G."/>
            <person name="Catcheside D.E.A."/>
            <person name="Li W."/>
            <person name="Pratt R.J."/>
            <person name="Osmani S.A."/>
            <person name="DeSouza C.P.C."/>
            <person name="Glass N.L."/>
            <person name="Orbach M.J."/>
            <person name="Berglund J.A."/>
            <person name="Voelker R."/>
            <person name="Yarden O."/>
            <person name="Plamann M."/>
            <person name="Seiler S."/>
            <person name="Dunlap J.C."/>
            <person name="Radford A."/>
            <person name="Aramayo R."/>
            <person name="Natvig D.O."/>
            <person name="Alex L.A."/>
            <person name="Mannhaupt G."/>
            <person name="Ebbole D.J."/>
            <person name="Freitag M."/>
            <person name="Paulsen I."/>
            <person name="Sachs M.S."/>
            <person name="Lander E.S."/>
            <person name="Nusbaum C."/>
            <person name="Birren B.W."/>
        </authorList>
    </citation>
    <scope>NUCLEOTIDE SEQUENCE [LARGE SCALE GENOMIC DNA]</scope>
    <source>
        <strain>ATCC 24698 / 74-OR23-1A / CBS 708.71 / DSM 1257 / FGSC 987</strain>
    </source>
</reference>
<reference key="3">
    <citation type="journal article" date="1990" name="Mol. Microbiol.">
        <title>Site-directed mutagenesis of the 'zinc finger' DNA-binding domain of the nitrogen-regulatory protein NIT2 of Neurospora.</title>
        <authorList>
            <person name="Fu Y.-H."/>
            <person name="Marzluf G.A."/>
        </authorList>
    </citation>
    <scope>MUTAGENESIS</scope>
</reference>
<reference key="4">
    <citation type="journal article" date="1995" name="Biochemistry">
        <title>The negative-acting NMR regulatory protein of Neurospora crassa binds to and inhibits the DNA-binding activity of the positive-acting nitrogen regulatory protein NIT2.</title>
        <authorList>
            <person name="Xiao X."/>
            <person name="Fu Y.H."/>
            <person name="Marzluf G.A."/>
        </authorList>
    </citation>
    <scope>FUNCTION</scope>
    <scope>INTERACTION WITH NMR-1</scope>
</reference>
<evidence type="ECO:0000255" key="1">
    <source>
        <dbReference type="PROSITE-ProRule" id="PRU00094"/>
    </source>
</evidence>
<evidence type="ECO:0000256" key="2">
    <source>
        <dbReference type="SAM" id="MobiDB-lite"/>
    </source>
</evidence>
<evidence type="ECO:0000269" key="3">
    <source>
    </source>
</evidence>
<evidence type="ECO:0000269" key="4">
    <source>
    </source>
</evidence>
<evidence type="ECO:0000305" key="5"/>
<dbReference type="EMBL" id="M33956">
    <property type="protein sequence ID" value="AAB03891.1"/>
    <property type="molecule type" value="Genomic_DNA"/>
</dbReference>
<dbReference type="EMBL" id="CM002236">
    <property type="protein sequence ID" value="EAA34560.3"/>
    <property type="molecule type" value="Genomic_DNA"/>
</dbReference>
<dbReference type="PIR" id="A34755">
    <property type="entry name" value="A34755"/>
</dbReference>
<dbReference type="RefSeq" id="XP_963796.3">
    <property type="nucleotide sequence ID" value="XM_958703.3"/>
</dbReference>
<dbReference type="PDB" id="5VQI">
    <property type="method" value="X-ray"/>
    <property type="resolution" value="2.50 A"/>
    <property type="chains" value="A/C=915-927"/>
</dbReference>
<dbReference type="PDB" id="6P6A">
    <property type="method" value="X-ray"/>
    <property type="resolution" value="2.15 A"/>
    <property type="chains" value="A/C=915-927"/>
</dbReference>
<dbReference type="PDBsum" id="5VQI"/>
<dbReference type="PDBsum" id="6P6A"/>
<dbReference type="SMR" id="P19212"/>
<dbReference type="STRING" id="367110.P19212"/>
<dbReference type="PaxDb" id="5141-EFNCRP00000008682"/>
<dbReference type="EnsemblFungi" id="EAA34560">
    <property type="protein sequence ID" value="EAA34560"/>
    <property type="gene ID" value="NCU09068"/>
</dbReference>
<dbReference type="GeneID" id="3879945"/>
<dbReference type="KEGG" id="ncr:NCU09068"/>
<dbReference type="VEuPathDB" id="FungiDB:NCU09068"/>
<dbReference type="HOGENOM" id="CLU_903421_0_0_1"/>
<dbReference type="InParanoid" id="P19212"/>
<dbReference type="OrthoDB" id="515401at2759"/>
<dbReference type="Proteomes" id="UP000001805">
    <property type="component" value="Chromosome 1, Linkage Group I"/>
</dbReference>
<dbReference type="GO" id="GO:0005634">
    <property type="term" value="C:nucleus"/>
    <property type="evidence" value="ECO:0000318"/>
    <property type="project" value="GO_Central"/>
</dbReference>
<dbReference type="GO" id="GO:0000981">
    <property type="term" value="F:DNA-binding transcription factor activity, RNA polymerase II-specific"/>
    <property type="evidence" value="ECO:0000318"/>
    <property type="project" value="GO_Central"/>
</dbReference>
<dbReference type="GO" id="GO:0000978">
    <property type="term" value="F:RNA polymerase II cis-regulatory region sequence-specific DNA binding"/>
    <property type="evidence" value="ECO:0000318"/>
    <property type="project" value="GO_Central"/>
</dbReference>
<dbReference type="GO" id="GO:0008270">
    <property type="term" value="F:zinc ion binding"/>
    <property type="evidence" value="ECO:0007669"/>
    <property type="project" value="UniProtKB-KW"/>
</dbReference>
<dbReference type="GO" id="GO:0000122">
    <property type="term" value="P:negative regulation of transcription by RNA polymerase II"/>
    <property type="evidence" value="ECO:0000318"/>
    <property type="project" value="GO_Central"/>
</dbReference>
<dbReference type="GO" id="GO:0042128">
    <property type="term" value="P:nitrate assimilation"/>
    <property type="evidence" value="ECO:0007669"/>
    <property type="project" value="UniProtKB-KW"/>
</dbReference>
<dbReference type="GO" id="GO:0045944">
    <property type="term" value="P:positive regulation of transcription by RNA polymerase II"/>
    <property type="evidence" value="ECO:0000318"/>
    <property type="project" value="GO_Central"/>
</dbReference>
<dbReference type="CDD" id="cd00202">
    <property type="entry name" value="ZnF_GATA"/>
    <property type="match status" value="1"/>
</dbReference>
<dbReference type="FunFam" id="3.30.50.10:FF:000007">
    <property type="entry name" value="Nitrogen regulatory AreA, N-terminal"/>
    <property type="match status" value="1"/>
</dbReference>
<dbReference type="Gene3D" id="3.30.50.10">
    <property type="entry name" value="Erythroid Transcription Factor GATA-1, subunit A"/>
    <property type="match status" value="1"/>
</dbReference>
<dbReference type="InterPro" id="IPR013860">
    <property type="entry name" value="AreA_GATA"/>
</dbReference>
<dbReference type="InterPro" id="IPR039355">
    <property type="entry name" value="Transcription_factor_GATA"/>
</dbReference>
<dbReference type="InterPro" id="IPR000679">
    <property type="entry name" value="Znf_GATA"/>
</dbReference>
<dbReference type="InterPro" id="IPR013088">
    <property type="entry name" value="Znf_NHR/GATA"/>
</dbReference>
<dbReference type="PANTHER" id="PTHR10071:SF281">
    <property type="entry name" value="BOX A-BINDING FACTOR-RELATED"/>
    <property type="match status" value="1"/>
</dbReference>
<dbReference type="PANTHER" id="PTHR10071">
    <property type="entry name" value="TRANSCRIPTION FACTOR GATA FAMILY MEMBER"/>
    <property type="match status" value="1"/>
</dbReference>
<dbReference type="Pfam" id="PF00320">
    <property type="entry name" value="GATA"/>
    <property type="match status" value="1"/>
</dbReference>
<dbReference type="Pfam" id="PF08550">
    <property type="entry name" value="GATA_AreA"/>
    <property type="match status" value="1"/>
</dbReference>
<dbReference type="PRINTS" id="PR00619">
    <property type="entry name" value="GATAZNFINGER"/>
</dbReference>
<dbReference type="SMART" id="SM00401">
    <property type="entry name" value="ZnF_GATA"/>
    <property type="match status" value="1"/>
</dbReference>
<dbReference type="SUPFAM" id="SSF57716">
    <property type="entry name" value="Glucocorticoid receptor-like (DNA-binding domain)"/>
    <property type="match status" value="1"/>
</dbReference>
<dbReference type="PROSITE" id="PS00344">
    <property type="entry name" value="GATA_ZN_FINGER_1"/>
    <property type="match status" value="1"/>
</dbReference>
<dbReference type="PROSITE" id="PS50114">
    <property type="entry name" value="GATA_ZN_FINGER_2"/>
    <property type="match status" value="1"/>
</dbReference>
<proteinExistence type="evidence at protein level"/>
<feature type="chain" id="PRO_0000083478" description="Nitrogen catabolic enzyme regulatory protein">
    <location>
        <begin position="1"/>
        <end position="1036"/>
    </location>
</feature>
<feature type="repeat" description="1">
    <location>
        <begin position="49"/>
        <end position="55"/>
    </location>
</feature>
<feature type="repeat" description="2">
    <location>
        <begin position="87"/>
        <end position="92"/>
    </location>
</feature>
<feature type="repeat" description="3">
    <location>
        <begin position="105"/>
        <end position="110"/>
    </location>
</feature>
<feature type="zinc finger region" description="GATA-type" evidence="1">
    <location>
        <begin position="743"/>
        <end position="767"/>
    </location>
</feature>
<feature type="region of interest" description="Disordered" evidence="2">
    <location>
        <begin position="1"/>
        <end position="126"/>
    </location>
</feature>
<feature type="region of interest" description="3 X approximate repeats">
    <location>
        <begin position="49"/>
        <end position="110"/>
    </location>
</feature>
<feature type="region of interest" description="Disordered" evidence="2">
    <location>
        <begin position="207"/>
        <end position="240"/>
    </location>
</feature>
<feature type="region of interest" description="Disordered" evidence="2">
    <location>
        <begin position="256"/>
        <end position="298"/>
    </location>
</feature>
<feature type="region of interest" description="Disordered" evidence="2">
    <location>
        <begin position="318"/>
        <end position="351"/>
    </location>
</feature>
<feature type="region of interest" description="Disordered" evidence="2">
    <location>
        <begin position="590"/>
        <end position="743"/>
    </location>
</feature>
<feature type="region of interest" description="Disordered" evidence="2">
    <location>
        <begin position="792"/>
        <end position="976"/>
    </location>
</feature>
<feature type="region of interest" description="Disordered" evidence="2">
    <location>
        <begin position="1000"/>
        <end position="1028"/>
    </location>
</feature>
<feature type="compositionally biased region" description="Low complexity" evidence="2">
    <location>
        <begin position="1"/>
        <end position="17"/>
    </location>
</feature>
<feature type="compositionally biased region" description="Basic and acidic residues" evidence="2">
    <location>
        <begin position="23"/>
        <end position="34"/>
    </location>
</feature>
<feature type="compositionally biased region" description="Low complexity" evidence="2">
    <location>
        <begin position="45"/>
        <end position="56"/>
    </location>
</feature>
<feature type="compositionally biased region" description="Low complexity" evidence="2">
    <location>
        <begin position="100"/>
        <end position="114"/>
    </location>
</feature>
<feature type="compositionally biased region" description="Polar residues" evidence="2">
    <location>
        <begin position="652"/>
        <end position="661"/>
    </location>
</feature>
<feature type="compositionally biased region" description="Low complexity" evidence="2">
    <location>
        <begin position="703"/>
        <end position="714"/>
    </location>
</feature>
<feature type="compositionally biased region" description="Polar residues" evidence="2">
    <location>
        <begin position="723"/>
        <end position="736"/>
    </location>
</feature>
<feature type="compositionally biased region" description="Polar residues" evidence="2">
    <location>
        <begin position="802"/>
        <end position="827"/>
    </location>
</feature>
<feature type="compositionally biased region" description="Low complexity" evidence="2">
    <location>
        <begin position="828"/>
        <end position="861"/>
    </location>
</feature>
<feature type="compositionally biased region" description="Low complexity" evidence="2">
    <location>
        <begin position="868"/>
        <end position="899"/>
    </location>
</feature>
<feature type="compositionally biased region" description="Polar residues" evidence="2">
    <location>
        <begin position="927"/>
        <end position="961"/>
    </location>
</feature>
<feature type="compositionally biased region" description="Low complexity" evidence="2">
    <location>
        <begin position="1000"/>
        <end position="1023"/>
    </location>
</feature>
<feature type="mutagenesis site" description="Abolishes DNA-binding." evidence="3">
    <original>CTNC</original>
    <variation>STNG</variation>
    <location>
        <begin position="743"/>
        <end position="746"/>
    </location>
</feature>
<feature type="mutagenesis site" description="Abolishes DNA-binding." evidence="3">
    <original>RR</original>
    <variation>GG</variation>
    <location>
        <begin position="755"/>
        <end position="756"/>
    </location>
</feature>
<feature type="mutagenesis site" description="Abolishes DNA-binding." evidence="3">
    <original>NA</original>
    <variation>DV</variation>
    <location>
        <begin position="765"/>
        <end position="766"/>
    </location>
</feature>
<feature type="mutagenesis site" description="Abolishes DNA-binding." evidence="3">
    <original>GL</original>
    <variation>DV</variation>
    <location>
        <begin position="768"/>
        <end position="769"/>
    </location>
</feature>
<feature type="mutagenesis site" description="Abolishes DNA-binding." evidence="3">
    <original>KR</original>
    <variation>NS</variation>
    <location>
        <begin position="789"/>
        <end position="790"/>
    </location>
</feature>
<feature type="sequence conflict" description="In Ref. 1; EAA34560." evidence="5" ref="1">
    <original>D</original>
    <variation>E</variation>
    <location>
        <position position="83"/>
    </location>
</feature>
<sequence>MAASTTTPTATTRPFFTMNPTTTEHDFRFPRRPGDSMAGTGLGGAAMSSSSANNNHNQHHPMSAFNHHHHHNAAGSARGRDSDGRPSSSNNNTSNGFVANINHQSSSNNNISKNIPPPTSDYHTQSASNGAAAYDLLRSSAFPPFQDGLAGMTQSPDEMQKQDPLATQVWKYFAKTKLALPNQERMENLTWRMMAKPLQTYRRQMETDRTHRFSESAPQKSTSGIARLRKSSEQTQSQGSDLMNLDDFINGENISTPAGLSLAPSPETSSKMADDRTAHHSTASAIPIKARKDQQSQHMIPQSVPAALHHPRMQTEFGYLPRHLRKTSIDETSKRNPNRKRPADFSPHVSAVTPSYVTNGLDADTDLHDYSLDHTSHDGLPPQTAPSSVPYALDTVGLDADTFITSAGPFQQNFSFSPSTSPMVSHDPFTAMFGPNNSSMHSGPINGNNFYSPPASAFQSTASTPHPMNEGGDNFYFGVDMRRARQQPYQPGNHGMGNAMAHQFPYAGNGNMMFPASSAGQDPTPSFAAPNSFSGHIDPTQVFHNEQAVRSPGMSVLQDSLFTFGAESDGDEEDGGAFADRNLSISHDFSSQGMEEPAFDSPSMGWDPSLPGNFSTQAARYPGGPPRKQVTIGATTTDYVDNTGEWDGSGLPRSQSQSFRQSDLRKGKMSRTASTPGLSARMNPFERLAQSASHSPPADVGRSSGLSSVPASRPSSPPPGAKQGSTTNLQGAAGNSTDTPTTCTNCFTQTTPLWRRNPDGQPLCNACGLFLKLHGVVRPLSLKTDVIKKRNRGSGASLPVGGTSTRSKKNASMSAAARKNSTLSITSNANNQPPAQVATPPAQQQVRASSVNESESPASGPASGGNTAGSTPTSYHGSTGSTSGAVGGKSVIPIASAPPKSAPGPGAGSMSRRDTISSKRQRRHSKSAGSDQPVSAGAVSSSGMDVDSPANSTGSNETMPTFNPGGAFSGLPPTTQSSLGFGNGYINTPRPMVGPGGMMGMPNGQAGQMMGASSSSGPGSGPSRTGAEWEWLTMSL</sequence>
<accession>P19212</accession>
<accession>Q7SCS7</accession>
<name>NIT2_NEUCR</name>
<comment type="function">
    <text evidence="4">Major nitrogen regulatory protein. During conditions of nitrogen limitation it turns on the expression of genes for enzymes which are required for the use of a variety of secondary nitrogen sources, including nitrates, purines, amino acids, and proteins.</text>
</comment>
<comment type="subunit">
    <text evidence="4">Interacts with nmr.</text>
</comment>
<comment type="subcellular location">
    <subcellularLocation>
        <location>Nucleus</location>
    </subcellularLocation>
</comment>
<comment type="induction">
    <text>By lack of a primary nitrogen source.</text>
</comment>
<protein>
    <recommendedName>
        <fullName>Nitrogen catabolic enzyme regulatory protein</fullName>
    </recommendedName>
    <alternativeName>
        <fullName>Nitrogen regulatory protein 2</fullName>
        <shortName>NIT2</shortName>
    </alternativeName>
</protein>
<organism>
    <name type="scientific">Neurospora crassa (strain ATCC 24698 / 74-OR23-1A / CBS 708.71 / DSM 1257 / FGSC 987)</name>
    <dbReference type="NCBI Taxonomy" id="367110"/>
    <lineage>
        <taxon>Eukaryota</taxon>
        <taxon>Fungi</taxon>
        <taxon>Dikarya</taxon>
        <taxon>Ascomycota</taxon>
        <taxon>Pezizomycotina</taxon>
        <taxon>Sordariomycetes</taxon>
        <taxon>Sordariomycetidae</taxon>
        <taxon>Sordariales</taxon>
        <taxon>Sordariaceae</taxon>
        <taxon>Neurospora</taxon>
    </lineage>
</organism>
<gene>
    <name type="primary">nit-2</name>
    <name type="synonym">amr</name>
    <name type="synonym">pink</name>
    <name type="ORF">NCU09068</name>
</gene>